<comment type="catalytic activity">
    <reaction evidence="1">
        <text>urea + 2 H2O + H(+) = hydrogencarbonate + 2 NH4(+)</text>
        <dbReference type="Rhea" id="RHEA:20557"/>
        <dbReference type="ChEBI" id="CHEBI:15377"/>
        <dbReference type="ChEBI" id="CHEBI:15378"/>
        <dbReference type="ChEBI" id="CHEBI:16199"/>
        <dbReference type="ChEBI" id="CHEBI:17544"/>
        <dbReference type="ChEBI" id="CHEBI:28938"/>
        <dbReference type="EC" id="3.5.1.5"/>
    </reaction>
</comment>
<comment type="pathway">
    <text evidence="1">Nitrogen metabolism; urea degradation; CO(2) and NH(3) from urea (urease route): step 1/1.</text>
</comment>
<comment type="subunit">
    <text evidence="1">Heterotrimer of UreA (gamma), UreB (beta) and UreC (alpha) subunits. Three heterotrimers associate to form the active enzyme.</text>
</comment>
<comment type="subcellular location">
    <subcellularLocation>
        <location evidence="1">Cytoplasm</location>
    </subcellularLocation>
</comment>
<comment type="similarity">
    <text evidence="1">Belongs to the urease gamma subunit family.</text>
</comment>
<dbReference type="EC" id="3.5.1.5" evidence="1"/>
<dbReference type="EMBL" id="CP000463">
    <property type="protein sequence ID" value="ABJ07664.1"/>
    <property type="molecule type" value="Genomic_DNA"/>
</dbReference>
<dbReference type="SMR" id="Q07K70"/>
<dbReference type="STRING" id="316055.RPE_3735"/>
<dbReference type="KEGG" id="rpe:RPE_3735"/>
<dbReference type="eggNOG" id="COG0831">
    <property type="taxonomic scope" value="Bacteria"/>
</dbReference>
<dbReference type="HOGENOM" id="CLU_145825_1_0_5"/>
<dbReference type="OrthoDB" id="9797217at2"/>
<dbReference type="UniPathway" id="UPA00258">
    <property type="reaction ID" value="UER00370"/>
</dbReference>
<dbReference type="GO" id="GO:0005737">
    <property type="term" value="C:cytoplasm"/>
    <property type="evidence" value="ECO:0007669"/>
    <property type="project" value="UniProtKB-SubCell"/>
</dbReference>
<dbReference type="GO" id="GO:0016151">
    <property type="term" value="F:nickel cation binding"/>
    <property type="evidence" value="ECO:0007669"/>
    <property type="project" value="InterPro"/>
</dbReference>
<dbReference type="GO" id="GO:0009039">
    <property type="term" value="F:urease activity"/>
    <property type="evidence" value="ECO:0007669"/>
    <property type="project" value="UniProtKB-UniRule"/>
</dbReference>
<dbReference type="GO" id="GO:0043419">
    <property type="term" value="P:urea catabolic process"/>
    <property type="evidence" value="ECO:0007669"/>
    <property type="project" value="UniProtKB-UniRule"/>
</dbReference>
<dbReference type="CDD" id="cd00390">
    <property type="entry name" value="Urease_gamma"/>
    <property type="match status" value="1"/>
</dbReference>
<dbReference type="Gene3D" id="3.30.280.10">
    <property type="entry name" value="Urease, gamma-like subunit"/>
    <property type="match status" value="1"/>
</dbReference>
<dbReference type="HAMAP" id="MF_00739">
    <property type="entry name" value="Urease_gamma"/>
    <property type="match status" value="1"/>
</dbReference>
<dbReference type="InterPro" id="IPR012010">
    <property type="entry name" value="Urease_gamma"/>
</dbReference>
<dbReference type="InterPro" id="IPR002026">
    <property type="entry name" value="Urease_gamma/gamma-beta_su"/>
</dbReference>
<dbReference type="InterPro" id="IPR036463">
    <property type="entry name" value="Urease_gamma_sf"/>
</dbReference>
<dbReference type="InterPro" id="IPR050069">
    <property type="entry name" value="Urease_subunit"/>
</dbReference>
<dbReference type="NCBIfam" id="NF009712">
    <property type="entry name" value="PRK13241.1"/>
    <property type="match status" value="1"/>
</dbReference>
<dbReference type="NCBIfam" id="TIGR00193">
    <property type="entry name" value="urease_gam"/>
    <property type="match status" value="1"/>
</dbReference>
<dbReference type="PANTHER" id="PTHR33569">
    <property type="entry name" value="UREASE"/>
    <property type="match status" value="1"/>
</dbReference>
<dbReference type="PANTHER" id="PTHR33569:SF1">
    <property type="entry name" value="UREASE"/>
    <property type="match status" value="1"/>
</dbReference>
<dbReference type="Pfam" id="PF00547">
    <property type="entry name" value="Urease_gamma"/>
    <property type="match status" value="1"/>
</dbReference>
<dbReference type="PIRSF" id="PIRSF001223">
    <property type="entry name" value="Urease_gamma"/>
    <property type="match status" value="1"/>
</dbReference>
<dbReference type="SUPFAM" id="SSF54111">
    <property type="entry name" value="Urease, gamma-subunit"/>
    <property type="match status" value="1"/>
</dbReference>
<organism>
    <name type="scientific">Rhodopseudomonas palustris (strain BisA53)</name>
    <dbReference type="NCBI Taxonomy" id="316055"/>
    <lineage>
        <taxon>Bacteria</taxon>
        <taxon>Pseudomonadati</taxon>
        <taxon>Pseudomonadota</taxon>
        <taxon>Alphaproteobacteria</taxon>
        <taxon>Hyphomicrobiales</taxon>
        <taxon>Nitrobacteraceae</taxon>
        <taxon>Rhodopseudomonas</taxon>
    </lineage>
</organism>
<accession>Q07K70</accession>
<evidence type="ECO:0000255" key="1">
    <source>
        <dbReference type="HAMAP-Rule" id="MF_00739"/>
    </source>
</evidence>
<gene>
    <name evidence="1" type="primary">ureA</name>
    <name type="ordered locus">RPE_3735</name>
</gene>
<feature type="chain" id="PRO_1000046361" description="Urease subunit gamma">
    <location>
        <begin position="1"/>
        <end position="100"/>
    </location>
</feature>
<proteinExistence type="inferred from homology"/>
<name>URE3_RHOP5</name>
<keyword id="KW-0963">Cytoplasm</keyword>
<keyword id="KW-0378">Hydrolase</keyword>
<reference key="1">
    <citation type="submission" date="2006-09" db="EMBL/GenBank/DDBJ databases">
        <title>Complete sequence of Rhodopseudomonas palustris BisA53.</title>
        <authorList>
            <consortium name="US DOE Joint Genome Institute"/>
            <person name="Copeland A."/>
            <person name="Lucas S."/>
            <person name="Lapidus A."/>
            <person name="Barry K."/>
            <person name="Detter J.C."/>
            <person name="Glavina del Rio T."/>
            <person name="Hammon N."/>
            <person name="Israni S."/>
            <person name="Dalin E."/>
            <person name="Tice H."/>
            <person name="Pitluck S."/>
            <person name="Chain P."/>
            <person name="Malfatti S."/>
            <person name="Shin M."/>
            <person name="Vergez L."/>
            <person name="Schmutz J."/>
            <person name="Larimer F."/>
            <person name="Land M."/>
            <person name="Hauser L."/>
            <person name="Pelletier D.A."/>
            <person name="Kyrpides N."/>
            <person name="Kim E."/>
            <person name="Harwood C.S."/>
            <person name="Oda Y."/>
            <person name="Richardson P."/>
        </authorList>
    </citation>
    <scope>NUCLEOTIDE SEQUENCE [LARGE SCALE GENOMIC DNA]</scope>
    <source>
        <strain>BisA53</strain>
    </source>
</reference>
<sequence length="100" mass="11036">MNLSPREKDKLLVSMAAMVARRRLERGVKLNHPEAIALISDFIVEGARDGRSVAELMQAGAEVLTRAQCMDGIAEMIHDIQVEATFPDGTKLVTVHQPIR</sequence>
<protein>
    <recommendedName>
        <fullName evidence="1">Urease subunit gamma</fullName>
        <ecNumber evidence="1">3.5.1.5</ecNumber>
    </recommendedName>
    <alternativeName>
        <fullName evidence="1">Urea amidohydrolase subunit gamma</fullName>
    </alternativeName>
</protein>